<protein>
    <recommendedName>
        <fullName>Cytochrome b</fullName>
    </recommendedName>
    <alternativeName>
        <fullName>Complex III subunit 3</fullName>
    </alternativeName>
    <alternativeName>
        <fullName>Complex III subunit III</fullName>
    </alternativeName>
    <alternativeName>
        <fullName>Cytochrome b-c1 complex subunit 3</fullName>
    </alternativeName>
    <alternativeName>
        <fullName>Ubiquinol-cytochrome-c reductase complex cytochrome b subunit</fullName>
    </alternativeName>
</protein>
<reference key="1">
    <citation type="journal article" date="1997" name="Zool. Sci.">
        <title>Molecular phylogeny from nucleotide sequences of the mitochondrial cytochrome b gene and evolutionary history of Eurasian soricine shrews (Mammalia, Insectivora).</title>
        <authorList>
            <person name="Ohdachi S."/>
            <person name="Masuda R."/>
            <person name="Abe H."/>
            <person name="Adachi J."/>
            <person name="Dokuchaev N.E."/>
            <person name="Haukisalmi V."/>
            <person name="Yoshida M.C."/>
        </authorList>
    </citation>
    <scope>NUCLEOTIDE SEQUENCE [GENOMIC DNA] OF 1-134</scope>
    <source>
        <strain>Isolate 94sak1</strain>
        <strain>Isolate 94su1</strain>
        <tissue>Muscle</tissue>
    </source>
</reference>
<reference key="2">
    <citation type="journal article" date="1999" name="Mol. Phylogenet. Evol.">
        <title>Molecular phylogeny and evolution of Sorex shrews (Soricidae: Insectivora) inferred from mitochondrial DNA sequence data.</title>
        <authorList>
            <person name="Fumagalli L."/>
            <person name="Taberlet P."/>
            <person name="Stewart D.T."/>
            <person name="Gielly L."/>
            <person name="Hausser J."/>
            <person name="Vogel P."/>
        </authorList>
    </citation>
    <scope>NUCLEOTIDE SEQUENCE [GENOMIC DNA] OF 44-379</scope>
</reference>
<accession>O79468</accession>
<accession>O21430</accession>
<accession>O21431</accession>
<gene>
    <name type="primary">MT-CYB</name>
    <name type="synonym">COB</name>
    <name type="synonym">CYTB</name>
    <name type="synonym">MTCYB</name>
</gene>
<evidence type="ECO:0000250" key="1"/>
<evidence type="ECO:0000250" key="2">
    <source>
        <dbReference type="UniProtKB" id="P00157"/>
    </source>
</evidence>
<evidence type="ECO:0000255" key="3">
    <source>
        <dbReference type="PROSITE-ProRule" id="PRU00967"/>
    </source>
</evidence>
<evidence type="ECO:0000255" key="4">
    <source>
        <dbReference type="PROSITE-ProRule" id="PRU00968"/>
    </source>
</evidence>
<sequence>MTNLRKTHPLMKIVNSSFIDLPAPSNISSWWNFGSLLGVCLIIQILTGLFLAMHYTSDTMTAFSSVTHICRDVNYGWLIRYLHANGASMFFICLFLHVGRGLYYGSYMYLETWNIGVLLLFAVMATAFMGYVLPWGQMSFWGATVITNLLSALPYIGSDLVEWIWGGFSVDKATLTRFFAFHFILPFIIAALAGVHLLFLHETGSNNPSGLCSDADKIPFHPYYTIKDILGVLLLILALTSLVLFSPDLLGDPDNYTLANPLNTPPHIKPEWYFLFAYAILRSIPNKLGGVLALVLSILVLAVVPFLHTSKQRSMMFRPFSQCLFWILVADLLTLTWIGGQPVEHPFIIIGQLASILYFLLILVIMPITSLFENNLLKW</sequence>
<keyword id="KW-0249">Electron transport</keyword>
<keyword id="KW-0349">Heme</keyword>
<keyword id="KW-0408">Iron</keyword>
<keyword id="KW-0472">Membrane</keyword>
<keyword id="KW-0479">Metal-binding</keyword>
<keyword id="KW-0496">Mitochondrion</keyword>
<keyword id="KW-0999">Mitochondrion inner membrane</keyword>
<keyword id="KW-0679">Respiratory chain</keyword>
<keyword id="KW-0812">Transmembrane</keyword>
<keyword id="KW-1133">Transmembrane helix</keyword>
<keyword id="KW-0813">Transport</keyword>
<keyword id="KW-0830">Ubiquinone</keyword>
<name>CYB_SORUN</name>
<feature type="chain" id="PRO_0000061586" description="Cytochrome b">
    <location>
        <begin position="1"/>
        <end position="379"/>
    </location>
</feature>
<feature type="transmembrane region" description="Helical" evidence="2">
    <location>
        <begin position="33"/>
        <end position="53"/>
    </location>
</feature>
<feature type="transmembrane region" description="Helical" evidence="2">
    <location>
        <begin position="77"/>
        <end position="98"/>
    </location>
</feature>
<feature type="transmembrane region" description="Helical" evidence="2">
    <location>
        <begin position="113"/>
        <end position="133"/>
    </location>
</feature>
<feature type="transmembrane region" description="Helical" evidence="2">
    <location>
        <begin position="178"/>
        <end position="198"/>
    </location>
</feature>
<feature type="transmembrane region" description="Helical" evidence="2">
    <location>
        <begin position="226"/>
        <end position="246"/>
    </location>
</feature>
<feature type="transmembrane region" description="Helical" evidence="2">
    <location>
        <begin position="288"/>
        <end position="308"/>
    </location>
</feature>
<feature type="transmembrane region" description="Helical" evidence="2">
    <location>
        <begin position="320"/>
        <end position="340"/>
    </location>
</feature>
<feature type="transmembrane region" description="Helical" evidence="2">
    <location>
        <begin position="347"/>
        <end position="367"/>
    </location>
</feature>
<feature type="binding site" description="axial binding residue" evidence="2">
    <location>
        <position position="83"/>
    </location>
    <ligand>
        <name>heme b</name>
        <dbReference type="ChEBI" id="CHEBI:60344"/>
        <label>b562</label>
    </ligand>
    <ligandPart>
        <name>Fe</name>
        <dbReference type="ChEBI" id="CHEBI:18248"/>
    </ligandPart>
</feature>
<feature type="binding site" description="axial binding residue" evidence="2">
    <location>
        <position position="97"/>
    </location>
    <ligand>
        <name>heme b</name>
        <dbReference type="ChEBI" id="CHEBI:60344"/>
        <label>b566</label>
    </ligand>
    <ligandPart>
        <name>Fe</name>
        <dbReference type="ChEBI" id="CHEBI:18248"/>
    </ligandPart>
</feature>
<feature type="binding site" description="axial binding residue" evidence="2">
    <location>
        <position position="182"/>
    </location>
    <ligand>
        <name>heme b</name>
        <dbReference type="ChEBI" id="CHEBI:60344"/>
        <label>b562</label>
    </ligand>
    <ligandPart>
        <name>Fe</name>
        <dbReference type="ChEBI" id="CHEBI:18248"/>
    </ligandPart>
</feature>
<feature type="binding site" description="axial binding residue" evidence="2">
    <location>
        <position position="196"/>
    </location>
    <ligand>
        <name>heme b</name>
        <dbReference type="ChEBI" id="CHEBI:60344"/>
        <label>b566</label>
    </ligand>
    <ligandPart>
        <name>Fe</name>
        <dbReference type="ChEBI" id="CHEBI:18248"/>
    </ligandPart>
</feature>
<feature type="binding site" evidence="2">
    <location>
        <position position="201"/>
    </location>
    <ligand>
        <name>a ubiquinone</name>
        <dbReference type="ChEBI" id="CHEBI:16389"/>
    </ligand>
</feature>
<feature type="sequence variant" description="In strain: Isolate 94sak1.">
    <original>V</original>
    <variation>I</variation>
    <location>
        <position position="98"/>
    </location>
</feature>
<geneLocation type="mitochondrion"/>
<dbReference type="EMBL" id="D85345">
    <property type="protein sequence ID" value="BAA21338.1"/>
    <property type="molecule type" value="Genomic_DNA"/>
</dbReference>
<dbReference type="EMBL" id="D85350">
    <property type="protein sequence ID" value="BAA21343.1"/>
    <property type="molecule type" value="Genomic_DNA"/>
</dbReference>
<dbReference type="EMBL" id="AJ000439">
    <property type="protein sequence ID" value="CAA04083.1"/>
    <property type="molecule type" value="Genomic_DNA"/>
</dbReference>
<dbReference type="SMR" id="O79468"/>
<dbReference type="GO" id="GO:0005743">
    <property type="term" value="C:mitochondrial inner membrane"/>
    <property type="evidence" value="ECO:0007669"/>
    <property type="project" value="UniProtKB-SubCell"/>
</dbReference>
<dbReference type="GO" id="GO:0045275">
    <property type="term" value="C:respiratory chain complex III"/>
    <property type="evidence" value="ECO:0007669"/>
    <property type="project" value="InterPro"/>
</dbReference>
<dbReference type="GO" id="GO:0046872">
    <property type="term" value="F:metal ion binding"/>
    <property type="evidence" value="ECO:0007669"/>
    <property type="project" value="UniProtKB-KW"/>
</dbReference>
<dbReference type="GO" id="GO:0008121">
    <property type="term" value="F:ubiquinol-cytochrome-c reductase activity"/>
    <property type="evidence" value="ECO:0007669"/>
    <property type="project" value="InterPro"/>
</dbReference>
<dbReference type="GO" id="GO:0006122">
    <property type="term" value="P:mitochondrial electron transport, ubiquinol to cytochrome c"/>
    <property type="evidence" value="ECO:0007669"/>
    <property type="project" value="TreeGrafter"/>
</dbReference>
<dbReference type="CDD" id="cd00290">
    <property type="entry name" value="cytochrome_b_C"/>
    <property type="match status" value="1"/>
</dbReference>
<dbReference type="CDD" id="cd00284">
    <property type="entry name" value="Cytochrome_b_N"/>
    <property type="match status" value="1"/>
</dbReference>
<dbReference type="FunFam" id="1.20.810.10:FF:000002">
    <property type="entry name" value="Cytochrome b"/>
    <property type="match status" value="1"/>
</dbReference>
<dbReference type="Gene3D" id="1.20.810.10">
    <property type="entry name" value="Cytochrome Bc1 Complex, Chain C"/>
    <property type="match status" value="1"/>
</dbReference>
<dbReference type="InterPro" id="IPR005798">
    <property type="entry name" value="Cyt_b/b6_C"/>
</dbReference>
<dbReference type="InterPro" id="IPR036150">
    <property type="entry name" value="Cyt_b/b6_C_sf"/>
</dbReference>
<dbReference type="InterPro" id="IPR005797">
    <property type="entry name" value="Cyt_b/b6_N"/>
</dbReference>
<dbReference type="InterPro" id="IPR027387">
    <property type="entry name" value="Cytb/b6-like_sf"/>
</dbReference>
<dbReference type="InterPro" id="IPR030689">
    <property type="entry name" value="Cytochrome_b"/>
</dbReference>
<dbReference type="InterPro" id="IPR048260">
    <property type="entry name" value="Cytochrome_b_C_euk/bac"/>
</dbReference>
<dbReference type="InterPro" id="IPR048259">
    <property type="entry name" value="Cytochrome_b_N_euk/bac"/>
</dbReference>
<dbReference type="InterPro" id="IPR016174">
    <property type="entry name" value="Di-haem_cyt_TM"/>
</dbReference>
<dbReference type="PANTHER" id="PTHR19271">
    <property type="entry name" value="CYTOCHROME B"/>
    <property type="match status" value="1"/>
</dbReference>
<dbReference type="PANTHER" id="PTHR19271:SF16">
    <property type="entry name" value="CYTOCHROME B"/>
    <property type="match status" value="1"/>
</dbReference>
<dbReference type="Pfam" id="PF00032">
    <property type="entry name" value="Cytochrom_B_C"/>
    <property type="match status" value="1"/>
</dbReference>
<dbReference type="Pfam" id="PF00033">
    <property type="entry name" value="Cytochrome_B"/>
    <property type="match status" value="1"/>
</dbReference>
<dbReference type="PIRSF" id="PIRSF038885">
    <property type="entry name" value="COB"/>
    <property type="match status" value="1"/>
</dbReference>
<dbReference type="SUPFAM" id="SSF81648">
    <property type="entry name" value="a domain/subunit of cytochrome bc1 complex (Ubiquinol-cytochrome c reductase)"/>
    <property type="match status" value="1"/>
</dbReference>
<dbReference type="SUPFAM" id="SSF81342">
    <property type="entry name" value="Transmembrane di-heme cytochromes"/>
    <property type="match status" value="1"/>
</dbReference>
<dbReference type="PROSITE" id="PS51003">
    <property type="entry name" value="CYTB_CTER"/>
    <property type="match status" value="1"/>
</dbReference>
<dbReference type="PROSITE" id="PS51002">
    <property type="entry name" value="CYTB_NTER"/>
    <property type="match status" value="1"/>
</dbReference>
<comment type="function">
    <text evidence="2">Component of the ubiquinol-cytochrome c reductase complex (complex III or cytochrome b-c1 complex) that is part of the mitochondrial respiratory chain. The b-c1 complex mediates electron transfer from ubiquinol to cytochrome c. Contributes to the generation of a proton gradient across the mitochondrial membrane that is then used for ATP synthesis.</text>
</comment>
<comment type="cofactor">
    <cofactor evidence="2">
        <name>heme b</name>
        <dbReference type="ChEBI" id="CHEBI:60344"/>
    </cofactor>
    <text evidence="2">Binds 2 heme b groups non-covalently.</text>
</comment>
<comment type="subunit">
    <text evidence="2">The cytochrome bc1 complex contains 11 subunits: 3 respiratory subunits (MT-CYB, CYC1 and UQCRFS1), 2 core proteins (UQCRC1 and UQCRC2) and 6 low-molecular weight proteins (UQCRH/QCR6, UQCRB/QCR7, UQCRQ/QCR8, UQCR10/QCR9, UQCR11/QCR10 and a cleavage product of UQCRFS1). This cytochrome bc1 complex then forms a dimer.</text>
</comment>
<comment type="subcellular location">
    <subcellularLocation>
        <location evidence="2">Mitochondrion inner membrane</location>
        <topology evidence="2">Multi-pass membrane protein</topology>
    </subcellularLocation>
</comment>
<comment type="miscellaneous">
    <text evidence="1">Heme 1 (or BL or b562) is low-potential and absorbs at about 562 nm, and heme 2 (or BH or b566) is high-potential and absorbs at about 566 nm.</text>
</comment>
<comment type="similarity">
    <text evidence="3 4">Belongs to the cytochrome b family.</text>
</comment>
<comment type="caution">
    <text evidence="2">The full-length protein contains only eight transmembrane helices, not nine as predicted by bioinformatics tools.</text>
</comment>
<proteinExistence type="inferred from homology"/>
<organism>
    <name type="scientific">Sorex unguiculatus</name>
    <name type="common">Long-clawed shrew</name>
    <dbReference type="NCBI Taxonomy" id="62275"/>
    <lineage>
        <taxon>Eukaryota</taxon>
        <taxon>Metazoa</taxon>
        <taxon>Chordata</taxon>
        <taxon>Craniata</taxon>
        <taxon>Vertebrata</taxon>
        <taxon>Euteleostomi</taxon>
        <taxon>Mammalia</taxon>
        <taxon>Eutheria</taxon>
        <taxon>Laurasiatheria</taxon>
        <taxon>Eulipotyphla</taxon>
        <taxon>Soricidae</taxon>
        <taxon>Soricinae</taxon>
        <taxon>Sorex</taxon>
    </lineage>
</organism>